<protein>
    <recommendedName>
        <fullName>Bombinin-like peptides 1</fullName>
    </recommendedName>
    <component>
        <recommendedName>
            <fullName>Acidic peptide 1</fullName>
        </recommendedName>
    </component>
    <component>
        <recommendedName>
            <fullName>Bombinin-like peptide 1</fullName>
            <shortName>BLP-1</shortName>
        </recommendedName>
    </component>
    <component>
        <recommendedName>
            <fullName>Octapeptide 1</fullName>
        </recommendedName>
    </component>
    <component>
        <recommendedName>
            <fullName>Acidic peptide 2</fullName>
        </recommendedName>
    </component>
    <component>
        <recommendedName>
            <fullName>Octapeptide 2</fullName>
        </recommendedName>
    </component>
    <component>
        <recommendedName>
            <fullName>Acidic peptide 3</fullName>
        </recommendedName>
    </component>
    <component>
        <recommendedName>
            <fullName>GH-1 peptide</fullName>
        </recommendedName>
    </component>
</protein>
<evidence type="ECO:0000255" key="1"/>
<evidence type="ECO:0000269" key="2">
    <source>
    </source>
</evidence>
<evidence type="ECO:0000305" key="3"/>
<name>BMNL1_BOMOR</name>
<sequence length="204" mass="22295">MNFKYIVAVSILIASAYARSEENDIQSLSQRDVLEEESLREIRGIGASILSAGKSALKGLAKGLAEHFANGKRTAEDHEVMKRLEAAIQSLSQRDVLEEESLREIRGIGASILSAGKSALKGLAKGLAEHFANGKRTAEEHEVMKRLEAVMRDLDSLDYPEEASEMETRSFNQEEIANLYTKKEKRILGPILGLVSNALGGLLG</sequence>
<reference key="1">
    <citation type="journal article" date="1991" name="J. Biol. Chem.">
        <title>Bombinin-like peptides with antimicrobial activity from skin secretions of the Asian toad, Bombina orientalis.</title>
        <authorList>
            <person name="Gibson B.W."/>
            <person name="Tang D."/>
            <person name="Mandrell R."/>
            <person name="Kelly M."/>
            <person name="Spindel E.R."/>
        </authorList>
    </citation>
    <scope>NUCLEOTIDE SEQUENCE [GENOMIC DNA]</scope>
    <scope>PROTEIN SEQUENCE OF 44-70 AND 107-133</scope>
    <scope>AMIDATION AT ASN-70 AND ASN-133</scope>
    <source>
        <tissue>Skin</tissue>
        <tissue>Skin secretion</tissue>
    </source>
</reference>
<organism>
    <name type="scientific">Bombina orientalis</name>
    <name type="common">Oriental fire-bellied toad</name>
    <dbReference type="NCBI Taxonomy" id="8346"/>
    <lineage>
        <taxon>Eukaryota</taxon>
        <taxon>Metazoa</taxon>
        <taxon>Chordata</taxon>
        <taxon>Craniata</taxon>
        <taxon>Vertebrata</taxon>
        <taxon>Euteleostomi</taxon>
        <taxon>Amphibia</taxon>
        <taxon>Batrachia</taxon>
        <taxon>Anura</taxon>
        <taxon>Bombinatoridae</taxon>
        <taxon>Bombina</taxon>
    </lineage>
</organism>
<accession>P29002</accession>
<proteinExistence type="evidence at protein level"/>
<keyword id="KW-0027">Amidation</keyword>
<keyword id="KW-0878">Amphibian defense peptide</keyword>
<keyword id="KW-0044">Antibiotic</keyword>
<keyword id="KW-0929">Antimicrobial</keyword>
<keyword id="KW-0165">Cleavage on pair of basic residues</keyword>
<keyword id="KW-0903">Direct protein sequencing</keyword>
<keyword id="KW-0677">Repeat</keyword>
<keyword id="KW-0964">Secreted</keyword>
<keyword id="KW-0732">Signal</keyword>
<feature type="signal peptide" description="Or 18">
    <location>
        <begin position="1"/>
        <end position="16"/>
    </location>
</feature>
<feature type="peptide" id="PRO_0000003051" description="Acidic peptide 1" evidence="1">
    <location>
        <begin position="17"/>
        <end position="43"/>
    </location>
</feature>
<feature type="peptide" id="PRO_0000003052" description="Bombinin-like peptide 1">
    <location>
        <begin position="44"/>
        <end position="70"/>
    </location>
</feature>
<feature type="peptide" id="PRO_0000003053" description="Octapeptide 1" evidence="1">
    <location>
        <begin position="74"/>
        <end position="81"/>
    </location>
</feature>
<feature type="peptide" id="PRO_0000003054" description="Acidic peptide 2" evidence="1">
    <location>
        <begin position="84"/>
        <end position="106"/>
    </location>
</feature>
<feature type="peptide" id="PRO_0000003055" description="Bombinin-like peptide 1">
    <location>
        <begin position="107"/>
        <end position="133"/>
    </location>
</feature>
<feature type="peptide" id="PRO_0000003056" description="Octapeptide 2" evidence="1">
    <location>
        <begin position="137"/>
        <end position="144"/>
    </location>
</feature>
<feature type="peptide" id="PRO_0000003057" description="Acidic peptide 3" evidence="1">
    <location>
        <begin position="147"/>
        <end position="181"/>
    </location>
</feature>
<feature type="peptide" id="PRO_0000003058" description="GH-1 peptide" evidence="1">
    <location>
        <begin position="187"/>
        <end position="204"/>
    </location>
</feature>
<feature type="modified residue" description="Asparagine amide" evidence="2">
    <location>
        <position position="70"/>
    </location>
</feature>
<feature type="modified residue" description="Asparagine amide" evidence="2">
    <location>
        <position position="133"/>
    </location>
</feature>
<dbReference type="EMBL" id="M76483">
    <property type="protein sequence ID" value="AAA73094.1"/>
    <property type="molecule type" value="Genomic_DNA"/>
</dbReference>
<dbReference type="PIR" id="A41575">
    <property type="entry name" value="A41575"/>
</dbReference>
<dbReference type="GO" id="GO:0005576">
    <property type="term" value="C:extracellular region"/>
    <property type="evidence" value="ECO:0007669"/>
    <property type="project" value="UniProtKB-SubCell"/>
</dbReference>
<dbReference type="GO" id="GO:0042742">
    <property type="term" value="P:defense response to bacterium"/>
    <property type="evidence" value="ECO:0007669"/>
    <property type="project" value="UniProtKB-KW"/>
</dbReference>
<dbReference type="InterPro" id="IPR007962">
    <property type="entry name" value="Bombinin"/>
</dbReference>
<dbReference type="Pfam" id="PF05298">
    <property type="entry name" value="Bombinin"/>
    <property type="match status" value="2"/>
</dbReference>
<comment type="function">
    <text>Has antimicrobial activity, but no hemolytic activity. Preference on killing Gram-negative non-enteric bacteria.</text>
</comment>
<comment type="subcellular location">
    <subcellularLocation>
        <location>Secreted</location>
    </subcellularLocation>
</comment>
<comment type="tissue specificity">
    <text>Expressed by the skin glands.</text>
</comment>
<comment type="similarity">
    <text evidence="3">Belongs to the bombinin family.</text>
</comment>